<sequence>MKKGKAKETKTIDVDKQEKKSVRIRRVKTGFLFSGILIPLVCVVAIPLSLNKNYSLKRTKYFTDDRTLYSIDKNTIKENNKTYKVITLTSKSLNVSDIMSESARYMNIPQKSFNNSVTYSNKINIRTNTNLLKNTKINETKVTKITNSNQTIFKLDLIQLWNEINSKSNNKISEFDFLSNIESINNAMTYSYIKNNKLFYFDNKQGYSGYIIQKFFENFDVEIRKENLKNKNVNVLEAFISSTIELNESLTEIKKITFDTKITLKYEI</sequence>
<accession>P43056</accession>
<accession>D1J8G7</accession>
<keyword id="KW-1185">Reference proteome</keyword>
<feature type="chain" id="PRO_0000066294" description="Uncharacterized protein MHO_3790">
    <location>
        <begin position="1"/>
        <end position="268"/>
    </location>
</feature>
<feature type="sequence conflict" description="In Ref. 1; CAA54668." evidence="1" ref="1">
    <original>T</original>
    <variation>K</variation>
    <location>
        <position position="9"/>
    </location>
</feature>
<name>Y3790_METH1</name>
<organism>
    <name type="scientific">Metamycoplasma hominis (strain ATCC 23114 / DSM 25592 / NBRC 14850 / NCTC 10111 / PG21)</name>
    <name type="common">Mycoplasma hominis</name>
    <dbReference type="NCBI Taxonomy" id="347256"/>
    <lineage>
        <taxon>Bacteria</taxon>
        <taxon>Bacillati</taxon>
        <taxon>Mycoplasmatota</taxon>
        <taxon>Mycoplasmoidales</taxon>
        <taxon>Metamycoplasmataceae</taxon>
        <taxon>Metamycoplasma</taxon>
    </lineage>
</organism>
<evidence type="ECO:0000305" key="1"/>
<reference key="1">
    <citation type="journal article" date="1994" name="J. Bacteriol.">
        <title>Sequencing analysis reveals a unique gene organization in the gyrB region of Mycoplasma hominis.</title>
        <authorList>
            <person name="Ladefoged S.A."/>
            <person name="Christiansen G."/>
        </authorList>
    </citation>
    <scope>NUCLEOTIDE SEQUENCE [GENOMIC DNA]</scope>
</reference>
<reference key="2">
    <citation type="journal article" date="2009" name="PLoS Genet.">
        <title>Life on arginine for Mycoplasma hominis: clues from its minimal genome and comparison with other human urogenital mycoplasmas.</title>
        <authorList>
            <person name="Pereyre S."/>
            <person name="Sirand-Pugnet P."/>
            <person name="Beven L."/>
            <person name="Charron A."/>
            <person name="Renaudin H."/>
            <person name="Barre A."/>
            <person name="Avenaud P."/>
            <person name="Jacob D."/>
            <person name="Couloux A."/>
            <person name="Barbe V."/>
            <person name="de Daruvar A."/>
            <person name="Blanchard A."/>
            <person name="Bebear C."/>
        </authorList>
    </citation>
    <scope>NUCLEOTIDE SEQUENCE [LARGE SCALE GENOMIC DNA]</scope>
    <source>
        <strain>ATCC 23114 / DSM 25592 / NBRC 14850 / NCTC 10111 / PG21</strain>
    </source>
</reference>
<protein>
    <recommendedName>
        <fullName>Uncharacterized protein MHO_3790</fullName>
    </recommendedName>
    <alternativeName>
        <fullName>ORF268</fullName>
    </alternativeName>
</protein>
<proteinExistence type="predicted"/>
<gene>
    <name type="ordered locus">MHO_3790</name>
</gene>
<dbReference type="EMBL" id="X77529">
    <property type="protein sequence ID" value="CAA54668.1"/>
    <property type="molecule type" value="Genomic_DNA"/>
</dbReference>
<dbReference type="EMBL" id="FP236530">
    <property type="protein sequence ID" value="CAX37514.1"/>
    <property type="molecule type" value="Genomic_DNA"/>
</dbReference>
<dbReference type="RefSeq" id="WP_012855653.1">
    <property type="nucleotide sequence ID" value="NC_013511.1"/>
</dbReference>
<dbReference type="STRING" id="347256.MHO_3790"/>
<dbReference type="PaxDb" id="347256-MHO_3790"/>
<dbReference type="KEGG" id="mho:MHO_3790"/>
<dbReference type="HOGENOM" id="CLU_1037534_0_0_14"/>
<dbReference type="Proteomes" id="UP000002631">
    <property type="component" value="Chromosome"/>
</dbReference>